<gene>
    <name evidence="1" type="primary">tolB</name>
    <name type="ordered locus">ECIAI39_0715</name>
</gene>
<dbReference type="EMBL" id="CU928164">
    <property type="protein sequence ID" value="CAR16852.1"/>
    <property type="molecule type" value="Genomic_DNA"/>
</dbReference>
<dbReference type="RefSeq" id="WP_001295307.1">
    <property type="nucleotide sequence ID" value="NC_011750.1"/>
</dbReference>
<dbReference type="RefSeq" id="YP_002406741.1">
    <property type="nucleotide sequence ID" value="NC_011750.1"/>
</dbReference>
<dbReference type="SMR" id="B7NMV9"/>
<dbReference type="STRING" id="585057.ECIAI39_0715"/>
<dbReference type="GeneID" id="93776744"/>
<dbReference type="KEGG" id="ect:ECIAI39_0715"/>
<dbReference type="PATRIC" id="fig|585057.6.peg.758"/>
<dbReference type="HOGENOM" id="CLU_047123_0_0_6"/>
<dbReference type="Proteomes" id="UP000000749">
    <property type="component" value="Chromosome"/>
</dbReference>
<dbReference type="GO" id="GO:0042597">
    <property type="term" value="C:periplasmic space"/>
    <property type="evidence" value="ECO:0007669"/>
    <property type="project" value="UniProtKB-SubCell"/>
</dbReference>
<dbReference type="GO" id="GO:0051301">
    <property type="term" value="P:cell division"/>
    <property type="evidence" value="ECO:0007669"/>
    <property type="project" value="UniProtKB-UniRule"/>
</dbReference>
<dbReference type="GO" id="GO:0017038">
    <property type="term" value="P:protein import"/>
    <property type="evidence" value="ECO:0007669"/>
    <property type="project" value="InterPro"/>
</dbReference>
<dbReference type="FunFam" id="2.120.10.30:FF:000022">
    <property type="entry name" value="Tol-Pal system protein TolB"/>
    <property type="match status" value="1"/>
</dbReference>
<dbReference type="FunFam" id="3.40.50.10070:FF:000001">
    <property type="entry name" value="Tol-Pal system protein TolB"/>
    <property type="match status" value="1"/>
</dbReference>
<dbReference type="Gene3D" id="2.120.10.30">
    <property type="entry name" value="TolB, C-terminal domain"/>
    <property type="match status" value="1"/>
</dbReference>
<dbReference type="Gene3D" id="3.40.50.10070">
    <property type="entry name" value="TolB, N-terminal domain"/>
    <property type="match status" value="1"/>
</dbReference>
<dbReference type="HAMAP" id="MF_00671">
    <property type="entry name" value="TolB"/>
    <property type="match status" value="1"/>
</dbReference>
<dbReference type="InterPro" id="IPR011042">
    <property type="entry name" value="6-blade_b-propeller_TolB-like"/>
</dbReference>
<dbReference type="InterPro" id="IPR011659">
    <property type="entry name" value="PD40"/>
</dbReference>
<dbReference type="InterPro" id="IPR014167">
    <property type="entry name" value="Tol-Pal_TolB"/>
</dbReference>
<dbReference type="InterPro" id="IPR007195">
    <property type="entry name" value="TolB_N"/>
</dbReference>
<dbReference type="NCBIfam" id="TIGR02800">
    <property type="entry name" value="propeller_TolB"/>
    <property type="match status" value="1"/>
</dbReference>
<dbReference type="PANTHER" id="PTHR36842:SF1">
    <property type="entry name" value="PROTEIN TOLB"/>
    <property type="match status" value="1"/>
</dbReference>
<dbReference type="PANTHER" id="PTHR36842">
    <property type="entry name" value="PROTEIN TOLB HOMOLOG"/>
    <property type="match status" value="1"/>
</dbReference>
<dbReference type="Pfam" id="PF07676">
    <property type="entry name" value="PD40"/>
    <property type="match status" value="4"/>
</dbReference>
<dbReference type="Pfam" id="PF04052">
    <property type="entry name" value="TolB_N"/>
    <property type="match status" value="1"/>
</dbReference>
<dbReference type="SUPFAM" id="SSF52964">
    <property type="entry name" value="TolB, N-terminal domain"/>
    <property type="match status" value="1"/>
</dbReference>
<dbReference type="SUPFAM" id="SSF69304">
    <property type="entry name" value="Tricorn protease N-terminal domain"/>
    <property type="match status" value="1"/>
</dbReference>
<evidence type="ECO:0000255" key="1">
    <source>
        <dbReference type="HAMAP-Rule" id="MF_00671"/>
    </source>
</evidence>
<reference key="1">
    <citation type="journal article" date="2009" name="PLoS Genet.">
        <title>Organised genome dynamics in the Escherichia coli species results in highly diverse adaptive paths.</title>
        <authorList>
            <person name="Touchon M."/>
            <person name="Hoede C."/>
            <person name="Tenaillon O."/>
            <person name="Barbe V."/>
            <person name="Baeriswyl S."/>
            <person name="Bidet P."/>
            <person name="Bingen E."/>
            <person name="Bonacorsi S."/>
            <person name="Bouchier C."/>
            <person name="Bouvet O."/>
            <person name="Calteau A."/>
            <person name="Chiapello H."/>
            <person name="Clermont O."/>
            <person name="Cruveiller S."/>
            <person name="Danchin A."/>
            <person name="Diard M."/>
            <person name="Dossat C."/>
            <person name="Karoui M.E."/>
            <person name="Frapy E."/>
            <person name="Garry L."/>
            <person name="Ghigo J.M."/>
            <person name="Gilles A.M."/>
            <person name="Johnson J."/>
            <person name="Le Bouguenec C."/>
            <person name="Lescat M."/>
            <person name="Mangenot S."/>
            <person name="Martinez-Jehanne V."/>
            <person name="Matic I."/>
            <person name="Nassif X."/>
            <person name="Oztas S."/>
            <person name="Petit M.A."/>
            <person name="Pichon C."/>
            <person name="Rouy Z."/>
            <person name="Ruf C.S."/>
            <person name="Schneider D."/>
            <person name="Tourret J."/>
            <person name="Vacherie B."/>
            <person name="Vallenet D."/>
            <person name="Medigue C."/>
            <person name="Rocha E.P.C."/>
            <person name="Denamur E."/>
        </authorList>
    </citation>
    <scope>NUCLEOTIDE SEQUENCE [LARGE SCALE GENOMIC DNA]</scope>
    <source>
        <strain>IAI39 / ExPEC</strain>
    </source>
</reference>
<protein>
    <recommendedName>
        <fullName evidence="1">Tol-Pal system protein TolB</fullName>
    </recommendedName>
</protein>
<comment type="function">
    <text evidence="1">Part of the Tol-Pal system, which plays a role in outer membrane invagination during cell division and is important for maintaining outer membrane integrity. TolB occupies a key intermediary position in the Tol-Pal system because it communicates directly with both membrane-embedded components, Pal in the outer membrane and TolA in the inner membrane.</text>
</comment>
<comment type="subunit">
    <text evidence="1">The Tol-Pal system is composed of five core proteins: the inner membrane proteins TolA, TolQ and TolR, the periplasmic protein TolB and the outer membrane protein Pal. They form a network linking the inner and outer membranes and the peptidoglycan layer.</text>
</comment>
<comment type="subcellular location">
    <subcellularLocation>
        <location evidence="1">Periplasm</location>
    </subcellularLocation>
</comment>
<comment type="similarity">
    <text evidence="1">Belongs to the TolB family.</text>
</comment>
<organism>
    <name type="scientific">Escherichia coli O7:K1 (strain IAI39 / ExPEC)</name>
    <dbReference type="NCBI Taxonomy" id="585057"/>
    <lineage>
        <taxon>Bacteria</taxon>
        <taxon>Pseudomonadati</taxon>
        <taxon>Pseudomonadota</taxon>
        <taxon>Gammaproteobacteria</taxon>
        <taxon>Enterobacterales</taxon>
        <taxon>Enterobacteriaceae</taxon>
        <taxon>Escherichia</taxon>
    </lineage>
</organism>
<proteinExistence type="inferred from homology"/>
<feature type="signal peptide" evidence="1">
    <location>
        <begin position="1"/>
        <end position="21"/>
    </location>
</feature>
<feature type="chain" id="PRO_1000131524" description="Tol-Pal system protein TolB" evidence="1">
    <location>
        <begin position="22"/>
        <end position="430"/>
    </location>
</feature>
<name>TOLB_ECO7I</name>
<sequence>MKQALRVAFGFLILWASVLHAEVRIVIDSGVDSGRPIGVVPFQWAGPGAAPEDIGGIVAADLRNSGKFNPLDRARLPQQPGSAQEVQPAAWSALGIDAVVVGQVTPNPDGSYNVAYQLVDTGGAPGTVLAQNSYKVNKQWLRYAGHTASDEVFEKLTGIKGAFRTRIAYVVQTNGGQFPYELRVSDYDGYNQFVVHRSPQPLMSPAWSPDGSKLAYVTFESGRSALVIQTLANGAVRQVASFPRHNGAPAFSPDGSKLAFALSKTGSLNLYVMDLASGQIRQVTDGRSNNTEPTWFPDSQNLAFTSDQAGRPQVYKVNINGGAPQRITWEGSQNQDADVSSDGKFMVMVSSNGGQQHIAKQDLATGGVQVLSSTFLDETPSLAPNGTMVIYSSSQGMGSVLNLVSTDGRFKARLPATDGQVKFPAWSPYL</sequence>
<keyword id="KW-0131">Cell cycle</keyword>
<keyword id="KW-0132">Cell division</keyword>
<keyword id="KW-0574">Periplasm</keyword>
<keyword id="KW-0732">Signal</keyword>
<accession>B7NMV9</accession>